<name>FAS2_SCHPO</name>
<proteinExistence type="evidence at protein level"/>
<keyword id="KW-0903">Direct protein sequencing</keyword>
<keyword id="KW-0275">Fatty acid biosynthesis</keyword>
<keyword id="KW-0276">Fatty acid metabolism</keyword>
<keyword id="KW-0444">Lipid biosynthesis</keyword>
<keyword id="KW-0443">Lipid metabolism</keyword>
<keyword id="KW-0460">Magnesium</keyword>
<keyword id="KW-0479">Metal-binding</keyword>
<keyword id="KW-0511">Multifunctional enzyme</keyword>
<keyword id="KW-0520">NAD</keyword>
<keyword id="KW-0521">NADP</keyword>
<keyword id="KW-0560">Oxidoreductase</keyword>
<keyword id="KW-0596">Phosphopantetheine</keyword>
<keyword id="KW-0597">Phosphoprotein</keyword>
<keyword id="KW-1185">Reference proteome</keyword>
<keyword id="KW-0808">Transferase</keyword>
<feature type="chain" id="PRO_0000180286" description="Fatty acid synthase subunit alpha">
    <location>
        <begin position="1"/>
        <end position="1842"/>
    </location>
</feature>
<feature type="domain" description="Carrier" evidence="2">
    <location>
        <begin position="145"/>
        <end position="220"/>
    </location>
</feature>
<feature type="domain" description="Ketosynthase family 3 (KS3)" evidence="3">
    <location>
        <begin position="1079"/>
        <end position="1616"/>
    </location>
</feature>
<feature type="region of interest" description="Disordered" evidence="4">
    <location>
        <begin position="101"/>
        <end position="141"/>
    </location>
</feature>
<feature type="region of interest" description="Disordered" evidence="4">
    <location>
        <begin position="1304"/>
        <end position="1332"/>
    </location>
</feature>
<feature type="compositionally biased region" description="Low complexity" evidence="4">
    <location>
        <begin position="116"/>
        <end position="139"/>
    </location>
</feature>
<feature type="active site" description="For beta-ketoacyl synthase activity" evidence="3">
    <location>
        <position position="1262"/>
    </location>
</feature>
<feature type="active site" description="For beta-ketoacyl synthase activity" evidence="3">
    <location>
        <position position="1501"/>
    </location>
</feature>
<feature type="active site" description="For beta-ketoacyl synthase activity" evidence="3">
    <location>
        <position position="1542"/>
    </location>
</feature>
<feature type="binding site" evidence="1">
    <location>
        <begin position="1728"/>
        <end position="1730"/>
    </location>
    <ligand>
        <name>acetyl-CoA</name>
        <dbReference type="ChEBI" id="CHEBI:57288"/>
    </ligand>
</feature>
<feature type="binding site" evidence="1">
    <location>
        <position position="1728"/>
    </location>
    <ligand>
        <name>Mg(2+)</name>
        <dbReference type="ChEBI" id="CHEBI:18420"/>
    </ligand>
</feature>
<feature type="binding site" evidence="1">
    <location>
        <position position="1729"/>
    </location>
    <ligand>
        <name>Mg(2+)</name>
        <dbReference type="ChEBI" id="CHEBI:18420"/>
    </ligand>
</feature>
<feature type="binding site" evidence="1">
    <location>
        <position position="1730"/>
    </location>
    <ligand>
        <name>Mg(2+)</name>
        <dbReference type="ChEBI" id="CHEBI:18420"/>
    </ligand>
</feature>
<feature type="binding site" evidence="1">
    <location>
        <position position="1754"/>
    </location>
    <ligand>
        <name>acetyl-CoA</name>
        <dbReference type="ChEBI" id="CHEBI:57288"/>
    </ligand>
</feature>
<feature type="binding site" evidence="1">
    <location>
        <position position="1764"/>
    </location>
    <ligand>
        <name>acetyl-CoA</name>
        <dbReference type="ChEBI" id="CHEBI:57288"/>
    </ligand>
</feature>
<feature type="binding site" evidence="1">
    <location>
        <begin position="1773"/>
        <end position="1783"/>
    </location>
    <ligand>
        <name>acetyl-CoA</name>
        <dbReference type="ChEBI" id="CHEBI:57288"/>
    </ligand>
</feature>
<feature type="binding site" evidence="1">
    <location>
        <begin position="1797"/>
        <end position="1800"/>
    </location>
    <ligand>
        <name>acetyl-CoA</name>
        <dbReference type="ChEBI" id="CHEBI:57288"/>
    </ligand>
</feature>
<feature type="binding site" evidence="1">
    <location>
        <begin position="1827"/>
        <end position="1829"/>
    </location>
    <ligand>
        <name>acetyl-CoA</name>
        <dbReference type="ChEBI" id="CHEBI:57288"/>
    </ligand>
</feature>
<feature type="binding site" evidence="1">
    <location>
        <position position="1828"/>
    </location>
    <ligand>
        <name>Mg(2+)</name>
        <dbReference type="ChEBI" id="CHEBI:18420"/>
    </ligand>
</feature>
<feature type="binding site" evidence="1">
    <location>
        <position position="1829"/>
    </location>
    <ligand>
        <name>Mg(2+)</name>
        <dbReference type="ChEBI" id="CHEBI:18420"/>
    </ligand>
</feature>
<feature type="modified residue" description="O-(pantetheine 4'-phosphoryl)serine" evidence="2">
    <location>
        <position position="180"/>
    </location>
</feature>
<feature type="modified residue" description="Phosphoserine" evidence="5">
    <location>
        <position position="604"/>
    </location>
</feature>
<feature type="modified residue" description="Phosphoserine" evidence="5">
    <location>
        <position position="1412"/>
    </location>
</feature>
<feature type="sequence variant" description="In strain: H265.">
    <original>E</original>
    <variation>V</variation>
    <location>
        <position position="4"/>
    </location>
</feature>
<feature type="sequence variant" description="In strain: H518.">
    <original>I</original>
    <variation>N</variation>
    <location>
        <position position="600"/>
    </location>
</feature>
<feature type="sequence variant" description="In strain: H201.">
    <original>I</original>
    <variation>T</variation>
    <location>
        <position position="1276"/>
    </location>
</feature>
<feature type="sequence conflict" description="In Ref. 4; AAB39943." evidence="6" ref="4">
    <original>S</original>
    <variation>A</variation>
    <location>
        <position position="107"/>
    </location>
</feature>
<feature type="sequence conflict" description="In Ref. 1; BAA11913." evidence="6" ref="1">
    <original>K</original>
    <variation>R</variation>
    <location>
        <position position="422"/>
    </location>
</feature>
<feature type="sequence conflict" description="In Ref. 6; BAA13877." evidence="6" ref="6">
    <original>P</original>
    <variation>S</variation>
    <location>
        <position position="1586"/>
    </location>
</feature>
<evidence type="ECO:0000250" key="1"/>
<evidence type="ECO:0000255" key="2">
    <source>
        <dbReference type="PROSITE-ProRule" id="PRU00258"/>
    </source>
</evidence>
<evidence type="ECO:0000255" key="3">
    <source>
        <dbReference type="PROSITE-ProRule" id="PRU01348"/>
    </source>
</evidence>
<evidence type="ECO:0000256" key="4">
    <source>
        <dbReference type="SAM" id="MobiDB-lite"/>
    </source>
</evidence>
<evidence type="ECO:0000269" key="5">
    <source>
    </source>
</evidence>
<evidence type="ECO:0000305" key="6"/>
<dbReference type="EC" id="2.3.1.86"/>
<dbReference type="EC" id="1.1.1.100"/>
<dbReference type="EC" id="2.3.1.41"/>
<dbReference type="EMBL" id="D83412">
    <property type="protein sequence ID" value="BAA11913.1"/>
    <property type="molecule type" value="Genomic_DNA"/>
</dbReference>
<dbReference type="EMBL" id="AB013747">
    <property type="protein sequence ID" value="BAB62029.1"/>
    <property type="molecule type" value="Genomic_DNA"/>
</dbReference>
<dbReference type="EMBL" id="AB013748">
    <property type="protein sequence ID" value="BAB62030.1"/>
    <property type="molecule type" value="Genomic_DNA"/>
</dbReference>
<dbReference type="EMBL" id="AB013749">
    <property type="protein sequence ID" value="BAB62031.1"/>
    <property type="molecule type" value="Genomic_DNA"/>
</dbReference>
<dbReference type="EMBL" id="AB013750">
    <property type="protein sequence ID" value="BAB62032.1"/>
    <property type="molecule type" value="Genomic_DNA"/>
</dbReference>
<dbReference type="EMBL" id="CU329670">
    <property type="protein sequence ID" value="CAB11481.1"/>
    <property type="molecule type" value="Genomic_DNA"/>
</dbReference>
<dbReference type="EMBL" id="U82216">
    <property type="protein sequence ID" value="AAB39943.1"/>
    <property type="molecule type" value="Genomic_DNA"/>
</dbReference>
<dbReference type="EMBL" id="D89216">
    <property type="protein sequence ID" value="BAA13877.1"/>
    <property type="molecule type" value="mRNA"/>
</dbReference>
<dbReference type="EMBL" id="U97396">
    <property type="protein sequence ID" value="AAB63888.1"/>
    <property type="molecule type" value="mRNA"/>
</dbReference>
<dbReference type="PIR" id="A54083">
    <property type="entry name" value="A54083"/>
</dbReference>
<dbReference type="PIR" id="T38781">
    <property type="entry name" value="T38781"/>
</dbReference>
<dbReference type="PIR" id="T43037">
    <property type="entry name" value="T43037"/>
</dbReference>
<dbReference type="PIR" id="T43409">
    <property type="entry name" value="T43409"/>
</dbReference>
<dbReference type="RefSeq" id="NP_593823.1">
    <property type="nucleotide sequence ID" value="NM_001019252.2"/>
</dbReference>
<dbReference type="SMR" id="Q10289"/>
<dbReference type="BioGRID" id="280032">
    <property type="interactions" value="9"/>
</dbReference>
<dbReference type="FunCoup" id="Q10289">
    <property type="interactions" value="24"/>
</dbReference>
<dbReference type="IntAct" id="Q10289">
    <property type="interactions" value="1"/>
</dbReference>
<dbReference type="STRING" id="284812.Q10289"/>
<dbReference type="iPTMnet" id="Q10289"/>
<dbReference type="PaxDb" id="4896-SPAC4A8.11c.1"/>
<dbReference type="EnsemblFungi" id="SPAC4A8.11c.1">
    <property type="protein sequence ID" value="SPAC4A8.11c.1:pep"/>
    <property type="gene ID" value="SPAC4A8.11c"/>
</dbReference>
<dbReference type="GeneID" id="2543618"/>
<dbReference type="KEGG" id="spo:2543618"/>
<dbReference type="PomBase" id="SPAC4A8.11c">
    <property type="gene designation" value="fas2"/>
</dbReference>
<dbReference type="VEuPathDB" id="FungiDB:SPAC4A8.11c"/>
<dbReference type="eggNOG" id="ENOG502QQJX">
    <property type="taxonomic scope" value="Eukaryota"/>
</dbReference>
<dbReference type="HOGENOM" id="CLU_000114_0_0_1"/>
<dbReference type="InParanoid" id="Q10289"/>
<dbReference type="OMA" id="FPTLPDW"/>
<dbReference type="PhylomeDB" id="Q10289"/>
<dbReference type="PRO" id="PR:Q10289"/>
<dbReference type="Proteomes" id="UP000002485">
    <property type="component" value="Chromosome I"/>
</dbReference>
<dbReference type="GO" id="GO:0005829">
    <property type="term" value="C:cytosol"/>
    <property type="evidence" value="ECO:0007005"/>
    <property type="project" value="PomBase"/>
</dbReference>
<dbReference type="GO" id="GO:0005835">
    <property type="term" value="C:fatty acid synthase complex"/>
    <property type="evidence" value="ECO:0000314"/>
    <property type="project" value="PomBase"/>
</dbReference>
<dbReference type="GO" id="GO:0004316">
    <property type="term" value="F:3-oxoacyl-[acyl-carrier-protein] reductase (NADPH) activity"/>
    <property type="evidence" value="ECO:0000266"/>
    <property type="project" value="PomBase"/>
</dbReference>
<dbReference type="GO" id="GO:0004315">
    <property type="term" value="F:3-oxoacyl-[acyl-carrier-protein] synthase activity"/>
    <property type="evidence" value="ECO:0000266"/>
    <property type="project" value="PomBase"/>
</dbReference>
<dbReference type="GO" id="GO:0004312">
    <property type="term" value="F:fatty acid synthase activity"/>
    <property type="evidence" value="ECO:0000314"/>
    <property type="project" value="PomBase"/>
</dbReference>
<dbReference type="GO" id="GO:0004321">
    <property type="term" value="F:fatty-acyl-CoA synthase activity"/>
    <property type="evidence" value="ECO:0007669"/>
    <property type="project" value="UniProtKB-EC"/>
</dbReference>
<dbReference type="GO" id="GO:0008897">
    <property type="term" value="F:holo-[acyl-carrier-protein] synthase activity"/>
    <property type="evidence" value="ECO:0000266"/>
    <property type="project" value="PomBase"/>
</dbReference>
<dbReference type="GO" id="GO:0000287">
    <property type="term" value="F:magnesium ion binding"/>
    <property type="evidence" value="ECO:0007669"/>
    <property type="project" value="InterPro"/>
</dbReference>
<dbReference type="GO" id="GO:0006633">
    <property type="term" value="P:fatty acid biosynthetic process"/>
    <property type="evidence" value="ECO:0000314"/>
    <property type="project" value="PomBase"/>
</dbReference>
<dbReference type="GO" id="GO:0042759">
    <property type="term" value="P:long-chain fatty acid biosynthetic process"/>
    <property type="evidence" value="ECO:0000315"/>
    <property type="project" value="PomBase"/>
</dbReference>
<dbReference type="GO" id="GO:0101026">
    <property type="term" value="P:mitotic nuclear membrane biogenesis"/>
    <property type="evidence" value="ECO:0000315"/>
    <property type="project" value="PomBase"/>
</dbReference>
<dbReference type="GO" id="GO:1900535">
    <property type="term" value="P:palmitic acid biosynthetic process"/>
    <property type="evidence" value="ECO:0000315"/>
    <property type="project" value="PomBase"/>
</dbReference>
<dbReference type="CDD" id="cd00828">
    <property type="entry name" value="elong_cond_enzymes"/>
    <property type="match status" value="1"/>
</dbReference>
<dbReference type="CDD" id="cd08950">
    <property type="entry name" value="KR_fFAS_SDR_c_like"/>
    <property type="match status" value="1"/>
</dbReference>
<dbReference type="FunFam" id="3.90.470.20:FF:000005">
    <property type="entry name" value="Fatty acid synthase alpha subunit FasA"/>
    <property type="match status" value="1"/>
</dbReference>
<dbReference type="FunFam" id="3.30.70.2490:FF:000001">
    <property type="entry name" value="Fatty acid synthase subunit alpha"/>
    <property type="match status" value="1"/>
</dbReference>
<dbReference type="FunFam" id="3.40.50.720:FF:000168">
    <property type="entry name" value="Fatty acid synthase subunit alpha"/>
    <property type="match status" value="1"/>
</dbReference>
<dbReference type="FunFam" id="3.90.25.70:FF:000001">
    <property type="entry name" value="Fatty acid synthase subunit alpha"/>
    <property type="match status" value="1"/>
</dbReference>
<dbReference type="Gene3D" id="3.30.70.2490">
    <property type="match status" value="1"/>
</dbReference>
<dbReference type="Gene3D" id="3.40.47.10">
    <property type="match status" value="1"/>
</dbReference>
<dbReference type="Gene3D" id="3.90.25.70">
    <property type="match status" value="1"/>
</dbReference>
<dbReference type="Gene3D" id="6.10.140.1390">
    <property type="match status" value="1"/>
</dbReference>
<dbReference type="Gene3D" id="6.10.140.1410">
    <property type="match status" value="1"/>
</dbReference>
<dbReference type="Gene3D" id="6.10.250.1930">
    <property type="match status" value="1"/>
</dbReference>
<dbReference type="Gene3D" id="6.10.250.1940">
    <property type="match status" value="1"/>
</dbReference>
<dbReference type="Gene3D" id="3.90.470.20">
    <property type="entry name" value="4'-phosphopantetheinyl transferase domain"/>
    <property type="match status" value="1"/>
</dbReference>
<dbReference type="Gene3D" id="3.40.50.720">
    <property type="entry name" value="NAD(P)-binding Rossmann-like Domain"/>
    <property type="match status" value="1"/>
</dbReference>
<dbReference type="HAMAP" id="MF_00101">
    <property type="entry name" value="AcpS"/>
    <property type="match status" value="1"/>
</dbReference>
<dbReference type="InterPro" id="IPR008278">
    <property type="entry name" value="4-PPantetheinyl_Trfase_dom"/>
</dbReference>
<dbReference type="InterPro" id="IPR037143">
    <property type="entry name" value="4-PPantetheinyl_Trfase_dom_sf"/>
</dbReference>
<dbReference type="InterPro" id="IPR002582">
    <property type="entry name" value="ACPS"/>
</dbReference>
<dbReference type="InterPro" id="IPR016035">
    <property type="entry name" value="Acyl_Trfase/lysoPLipase"/>
</dbReference>
<dbReference type="InterPro" id="IPR040899">
    <property type="entry name" value="Fas_alpha_ACP"/>
</dbReference>
<dbReference type="InterPro" id="IPR047224">
    <property type="entry name" value="FAS_alpha_su_C"/>
</dbReference>
<dbReference type="InterPro" id="IPR026025">
    <property type="entry name" value="FAS_alpha_yeast"/>
</dbReference>
<dbReference type="InterPro" id="IPR041550">
    <property type="entry name" value="FASI_helical"/>
</dbReference>
<dbReference type="InterPro" id="IPR050830">
    <property type="entry name" value="Fungal_FAS"/>
</dbReference>
<dbReference type="InterPro" id="IPR018201">
    <property type="entry name" value="Ketoacyl_synth_AS"/>
</dbReference>
<dbReference type="InterPro" id="IPR014031">
    <property type="entry name" value="Ketoacyl_synth_C"/>
</dbReference>
<dbReference type="InterPro" id="IPR014030">
    <property type="entry name" value="Ketoacyl_synth_N"/>
</dbReference>
<dbReference type="InterPro" id="IPR036291">
    <property type="entry name" value="NAD(P)-bd_dom_sf"/>
</dbReference>
<dbReference type="InterPro" id="IPR020841">
    <property type="entry name" value="PKS_Beta-ketoAc_synthase_dom"/>
</dbReference>
<dbReference type="InterPro" id="IPR009081">
    <property type="entry name" value="PP-bd_ACP"/>
</dbReference>
<dbReference type="InterPro" id="IPR004568">
    <property type="entry name" value="Ppantetheine-prot_Trfase_dom"/>
</dbReference>
<dbReference type="InterPro" id="IPR002347">
    <property type="entry name" value="SDR_fam"/>
</dbReference>
<dbReference type="InterPro" id="IPR016039">
    <property type="entry name" value="Thiolase-like"/>
</dbReference>
<dbReference type="NCBIfam" id="TIGR00556">
    <property type="entry name" value="pantethn_trn"/>
    <property type="match status" value="1"/>
</dbReference>
<dbReference type="PANTHER" id="PTHR10982:SF21">
    <property type="entry name" value="FATTY ACID SYNTHASE SUBUNIT BETA"/>
    <property type="match status" value="1"/>
</dbReference>
<dbReference type="PANTHER" id="PTHR10982">
    <property type="entry name" value="MALONYL COA-ACYL CARRIER PROTEIN TRANSACYLASE"/>
    <property type="match status" value="1"/>
</dbReference>
<dbReference type="Pfam" id="PF01648">
    <property type="entry name" value="ACPS"/>
    <property type="match status" value="1"/>
</dbReference>
<dbReference type="Pfam" id="PF00106">
    <property type="entry name" value="adh_short"/>
    <property type="match status" value="1"/>
</dbReference>
<dbReference type="Pfam" id="PF18325">
    <property type="entry name" value="Fas_alpha_ACP"/>
    <property type="match status" value="1"/>
</dbReference>
<dbReference type="Pfam" id="PF18314">
    <property type="entry name" value="FAS_I_H"/>
    <property type="match status" value="1"/>
</dbReference>
<dbReference type="Pfam" id="PF00109">
    <property type="entry name" value="ketoacyl-synt"/>
    <property type="match status" value="1"/>
</dbReference>
<dbReference type="Pfam" id="PF02801">
    <property type="entry name" value="Ketoacyl-synt_C"/>
    <property type="match status" value="1"/>
</dbReference>
<dbReference type="PIRSF" id="PIRSF000454">
    <property type="entry name" value="FAS_yeast_alpha"/>
    <property type="match status" value="1"/>
</dbReference>
<dbReference type="SUPFAM" id="SSF56214">
    <property type="entry name" value="4'-phosphopantetheinyl transferase"/>
    <property type="match status" value="1"/>
</dbReference>
<dbReference type="SUPFAM" id="SSF52151">
    <property type="entry name" value="FabD/lysophospholipase-like"/>
    <property type="match status" value="1"/>
</dbReference>
<dbReference type="SUPFAM" id="SSF51735">
    <property type="entry name" value="NAD(P)-binding Rossmann-fold domains"/>
    <property type="match status" value="1"/>
</dbReference>
<dbReference type="SUPFAM" id="SSF53901">
    <property type="entry name" value="Thiolase-like"/>
    <property type="match status" value="2"/>
</dbReference>
<dbReference type="PROSITE" id="PS50075">
    <property type="entry name" value="CARRIER"/>
    <property type="match status" value="1"/>
</dbReference>
<dbReference type="PROSITE" id="PS00606">
    <property type="entry name" value="KS3_1"/>
    <property type="match status" value="1"/>
</dbReference>
<dbReference type="PROSITE" id="PS52004">
    <property type="entry name" value="KS3_2"/>
    <property type="match status" value="1"/>
</dbReference>
<dbReference type="PROSITE" id="PS00012">
    <property type="entry name" value="PHOSPHOPANTETHEINE"/>
    <property type="match status" value="1"/>
</dbReference>
<protein>
    <recommendedName>
        <fullName>Fatty acid synthase subunit alpha</fullName>
        <ecNumber>2.3.1.86</ecNumber>
    </recommendedName>
    <alternativeName>
        <fullName>p190/210</fullName>
    </alternativeName>
    <domain>
        <recommendedName>
            <fullName>Acyl carrier</fullName>
        </recommendedName>
    </domain>
    <domain>
        <recommendedName>
            <fullName>3-oxoacyl-[acyl-carrier-protein] reductase</fullName>
            <ecNumber>1.1.1.100</ecNumber>
        </recommendedName>
        <alternativeName>
            <fullName>Beta-ketoacyl reductase</fullName>
        </alternativeName>
    </domain>
    <domain>
        <recommendedName>
            <fullName>3-oxoacyl-[acyl-carrier-protein] synthase</fullName>
            <ecNumber>2.3.1.41</ecNumber>
        </recommendedName>
        <alternativeName>
            <fullName>Beta-ketoacyl synthase</fullName>
        </alternativeName>
    </domain>
</protein>
<reference key="1">
    <citation type="journal article" date="1996" name="J. Cell Biol.">
        <title>Aberrant mitosis in fission yeast mutants defective in fatty acid synthetase and acetyl CoA carboxylase.</title>
        <authorList>
            <person name="Saitoh S."/>
            <person name="Takahashi K."/>
            <person name="Nabeshima K."/>
            <person name="Yamashita Y."/>
            <person name="Nakaseko Y."/>
            <person name="Hirata A."/>
            <person name="Yanagida M."/>
        </authorList>
    </citation>
    <scope>NUCLEOTIDE SEQUENCE [GENOMIC DNA]</scope>
</reference>
<reference key="2">
    <citation type="journal article" date="2001" name="Biochim. Biophys. Acta">
        <title>Very long-chain fatty-acid-containing phospholipids accumulate in fatty acid synthase temperature-sensitive mutant strains of the fission yeast Schizosaccharomyces pombe fas2/lsd1.</title>
        <authorList>
            <person name="Yokoyama K."/>
            <person name="Saitoh S."/>
            <person name="Ishida M."/>
            <person name="Yamakawa Y."/>
            <person name="Nakamura K."/>
            <person name="Inoue K."/>
            <person name="Taguchi R."/>
            <person name="Tokumura A."/>
            <person name="Nishijima M."/>
            <person name="Yanagida M."/>
            <person name="Setaka M."/>
        </authorList>
    </citation>
    <scope>NUCLEOTIDE SEQUENCE [GENOMIC DNA]</scope>
    <source>
        <strain>972 / ATCC 24843</strain>
        <strain>H201</strain>
        <strain>H265</strain>
        <strain>H518</strain>
    </source>
</reference>
<reference key="3">
    <citation type="journal article" date="2002" name="Nature">
        <title>The genome sequence of Schizosaccharomyces pombe.</title>
        <authorList>
            <person name="Wood V."/>
            <person name="Gwilliam R."/>
            <person name="Rajandream M.A."/>
            <person name="Lyne M.H."/>
            <person name="Lyne R."/>
            <person name="Stewart A."/>
            <person name="Sgouros J.G."/>
            <person name="Peat N."/>
            <person name="Hayles J."/>
            <person name="Baker S.G."/>
            <person name="Basham D."/>
            <person name="Bowman S."/>
            <person name="Brooks K."/>
            <person name="Brown D."/>
            <person name="Brown S."/>
            <person name="Chillingworth T."/>
            <person name="Churcher C.M."/>
            <person name="Collins M."/>
            <person name="Connor R."/>
            <person name="Cronin A."/>
            <person name="Davis P."/>
            <person name="Feltwell T."/>
            <person name="Fraser A."/>
            <person name="Gentles S."/>
            <person name="Goble A."/>
            <person name="Hamlin N."/>
            <person name="Harris D.E."/>
            <person name="Hidalgo J."/>
            <person name="Hodgson G."/>
            <person name="Holroyd S."/>
            <person name="Hornsby T."/>
            <person name="Howarth S."/>
            <person name="Huckle E.J."/>
            <person name="Hunt S."/>
            <person name="Jagels K."/>
            <person name="James K.D."/>
            <person name="Jones L."/>
            <person name="Jones M."/>
            <person name="Leather S."/>
            <person name="McDonald S."/>
            <person name="McLean J."/>
            <person name="Mooney P."/>
            <person name="Moule S."/>
            <person name="Mungall K.L."/>
            <person name="Murphy L.D."/>
            <person name="Niblett D."/>
            <person name="Odell C."/>
            <person name="Oliver K."/>
            <person name="O'Neil S."/>
            <person name="Pearson D."/>
            <person name="Quail M.A."/>
            <person name="Rabbinowitsch E."/>
            <person name="Rutherford K.M."/>
            <person name="Rutter S."/>
            <person name="Saunders D."/>
            <person name="Seeger K."/>
            <person name="Sharp S."/>
            <person name="Skelton J."/>
            <person name="Simmonds M.N."/>
            <person name="Squares R."/>
            <person name="Squares S."/>
            <person name="Stevens K."/>
            <person name="Taylor K."/>
            <person name="Taylor R.G."/>
            <person name="Tivey A."/>
            <person name="Walsh S.V."/>
            <person name="Warren T."/>
            <person name="Whitehead S."/>
            <person name="Woodward J.R."/>
            <person name="Volckaert G."/>
            <person name="Aert R."/>
            <person name="Robben J."/>
            <person name="Grymonprez B."/>
            <person name="Weltjens I."/>
            <person name="Vanstreels E."/>
            <person name="Rieger M."/>
            <person name="Schaefer M."/>
            <person name="Mueller-Auer S."/>
            <person name="Gabel C."/>
            <person name="Fuchs M."/>
            <person name="Duesterhoeft A."/>
            <person name="Fritzc C."/>
            <person name="Holzer E."/>
            <person name="Moestl D."/>
            <person name="Hilbert H."/>
            <person name="Borzym K."/>
            <person name="Langer I."/>
            <person name="Beck A."/>
            <person name="Lehrach H."/>
            <person name="Reinhardt R."/>
            <person name="Pohl T.M."/>
            <person name="Eger P."/>
            <person name="Zimmermann W."/>
            <person name="Wedler H."/>
            <person name="Wambutt R."/>
            <person name="Purnelle B."/>
            <person name="Goffeau A."/>
            <person name="Cadieu E."/>
            <person name="Dreano S."/>
            <person name="Gloux S."/>
            <person name="Lelaure V."/>
            <person name="Mottier S."/>
            <person name="Galibert F."/>
            <person name="Aves S.J."/>
            <person name="Xiang Z."/>
            <person name="Hunt C."/>
            <person name="Moore K."/>
            <person name="Hurst S.M."/>
            <person name="Lucas M."/>
            <person name="Rochet M."/>
            <person name="Gaillardin C."/>
            <person name="Tallada V.A."/>
            <person name="Garzon A."/>
            <person name="Thode G."/>
            <person name="Daga R.R."/>
            <person name="Cruzado L."/>
            <person name="Jimenez J."/>
            <person name="Sanchez M."/>
            <person name="del Rey F."/>
            <person name="Benito J."/>
            <person name="Dominguez A."/>
            <person name="Revuelta J.L."/>
            <person name="Moreno S."/>
            <person name="Armstrong J."/>
            <person name="Forsburg S.L."/>
            <person name="Cerutti L."/>
            <person name="Lowe T."/>
            <person name="McCombie W.R."/>
            <person name="Paulsen I."/>
            <person name="Potashkin J."/>
            <person name="Shpakovski G.V."/>
            <person name="Ussery D."/>
            <person name="Barrell B.G."/>
            <person name="Nurse P."/>
        </authorList>
    </citation>
    <scope>NUCLEOTIDE SEQUENCE [LARGE SCALE GENOMIC DNA]</scope>
    <source>
        <strain>972 / ATCC 24843</strain>
    </source>
</reference>
<reference key="4">
    <citation type="submission" date="1997-02" db="EMBL/GenBank/DDBJ databases">
        <authorList>
            <person name="Koken M.H.M."/>
            <person name="de Rooij J."/>
        </authorList>
    </citation>
    <scope>NUCLEOTIDE SEQUENCE [GENOMIC DNA] OF 1-215</scope>
</reference>
<reference key="5">
    <citation type="journal article" date="1994" name="J. Biol. Chem.">
        <title>Schizosaccharomyces pombe fatty acid synthase mediates DNA strand exchange in vitro.</title>
        <authorList>
            <person name="Kaeslin E."/>
            <person name="Heyer W.-D."/>
        </authorList>
    </citation>
    <scope>PROTEIN SEQUENCE OF 1-20</scope>
</reference>
<reference key="6">
    <citation type="journal article" date="1997" name="DNA Res.">
        <title>Identification of open reading frames in Schizosaccharomyces pombe cDNAs.</title>
        <authorList>
            <person name="Yoshioka S."/>
            <person name="Kato K."/>
            <person name="Nakai K."/>
            <person name="Okayama H."/>
            <person name="Nojima H."/>
        </authorList>
    </citation>
    <scope>NUCLEOTIDE SEQUENCE [LARGE SCALE MRNA] OF 1466-1842</scope>
    <source>
        <strain>PR745</strain>
    </source>
</reference>
<reference key="7">
    <citation type="submission" date="1997-04" db="EMBL/GenBank/DDBJ databases">
        <authorList>
            <person name="Jang Y.-J."/>
            <person name="Yoo H.-S."/>
        </authorList>
    </citation>
    <scope>NUCLEOTIDE SEQUENCE [MRNA] OF 1505-1564</scope>
    <source>
        <strain>972 / ATCC 24843</strain>
    </source>
</reference>
<reference key="8">
    <citation type="journal article" date="2008" name="J. Proteome Res.">
        <title>Phosphoproteome analysis of fission yeast.</title>
        <authorList>
            <person name="Wilson-Grady J.T."/>
            <person name="Villen J."/>
            <person name="Gygi S.P."/>
        </authorList>
    </citation>
    <scope>PHOSPHORYLATION [LARGE SCALE ANALYSIS] AT SER-604 AND SER-1412</scope>
    <scope>IDENTIFICATION BY MASS SPECTROMETRY</scope>
</reference>
<accession>Q10289</accession>
<accession>O14163</accession>
<accession>P78866</accession>
<accession>P78973</accession>
<accession>Q96WT6</accession>
<accession>Q96WT7</accession>
<accession>Q96WT8</accession>
<accession>Q9URI5</accession>
<sequence length="1842" mass="202169">MRPEVEQELAHTLLLELLAYQFASPVRWIETQDVILSPPVSAERIVEIGPSPTLAGMAKRTLKLKYENMDAALSINREVLCYSKDAREIYYNFEDEVADEPAEAPASTSSTPKVETAAAAAPAATPAPAPAQTSAPAAALPDEPPKALEVLHTLVAQKLKKSIEEVSPQKSIKDLVGGKSTLQNEILGDLQKEFGATPEKPEEVPLDELGAIMQSSFNGSLGKQSSSLISRMISSKMPGGFNNSAVRGYLGNRYGLGPGRLESVLLLALTMEPASRLGSEADAKAWLDSVAQKYAARNGVTLSSPTAEGGSSSGSAAVIDEETFKKLTKNNTMLVTQQLELFARYLNKDLRAGQKAQVAEKVISDTLRAQLDLWNEEHGEFYASGIAPIFSPLKARVYDSDWNWARQDALKMFFDIIFGRLKHVDTEIVARCISVMNRSNPTLLEFMQYHIDHCPAEKGETYQLAKTLGQQLIDNCKSVIDAPPVFKNVNHPTAPSTTIDERGNLNYEEIPRPGVRKLTHYVTEMAKGGKLPTESKNKAKVQNDLARIYRIIKSQNKMSRSSKLQIKQLYGQVLHALSLPLPSSNDEQTPVKETIPFLHIRKKSVDGNWEFNKSLTGTYLDVLESGAKNGITYQDKYALVTGAGAGSIGAQIVEGLLAGGAKVVVTTSRFSRKVTEFYQSLYTRHGSRGSCLIVVPFNQGSKTDVEALIDYIYDEKKGLGWNLDYIVPFAAIPENGREIDGIDSRSEFAHRIMLTNILRLLGAVKSQKASRGMDTRPAQVILPLSPNHGTFGNDGLYSESKLGLETLFNRWYSESWANYLTICGAVIGWTRGTGLMAPNNIVSQGIEKYGVRTFSQSEMAFNILGLMSQKVVDLCQSEPIYANLNGGLELLPDLKDLSTRLRTELLETAEIRRAVAAETAFDHSITNGPDSEAVFQKTAIQPRANLKFNFPKLKPYEALSHLSDLRGMVDLEKVPVVTGFSEVGPWGNSRTRWDMECYGEFSLEGCVEIAWIMGLIKNFNGKGKDGKPYSGWVDTKTGEPVDDKDVKAKYEKYILEHCGIRIIEAELFHGYNPEKKELLQEVVIDHDLEPFEASKEAAHEFKLRHGDQVEIFEIPDSTEWSVRFKRGTSMLIPKALRFDRFVAGQIPLGWDPKRYGIPDDIISQVDPTTLYVLVSTVEALVASGITDPYECYKYIHVSELGNTVGSGIGGMSALRGMYKDRWTDKPVQKDILQESFINTANAWINMLLLSASGPIKTPVGACATAVESVDAAVDLITSGKARICISGGYDDFSEEGSYEFANMGATSNAAKETERGRTPQEMSRPATSTRDGFMESQGAGVQIIMQAKLAIEMGVPIHGIVGYVSTAMDKQGRSVPAPGQGILTGAREIATKTPLPIVDLKFRSRQLQRRRSQIGEWAEREYLYLEEELDAMKVQNPDLDLEAYRIERINVIKEEVVRQEKEALNTFGNEFWKRDPTIAPIRGALAVWGLTIDDLGVASFHGTSTKANEKNECDVIDSQLTHLGRSKGNAVYGVFQKYLTGHSKGGAGAWMLNGALQILRSGFVPGNRNADNIDEYLARFDRVMFPSEGIQTDGIKAASVTAFGFGQVGGQVIVIHPDYIYGVIDEATYNAYKAKTAARYKASYRYTHDALVYNNLVRAKDSPPYTKEQEKAVYLNPLARASKSKAGTWTFPATLPAESDISKTNETTRTLQSLTTSLTNSNENVGVDVELVSAISIDNETFIERNFTDTERKYCFAAPNPQASFAGRWSAKEAVFKSLGISGKGAAAPLKDIEIISSESGAPEVVLHGEAAKAATTAGVKSVSVSISHDDNQSVSVALAHK</sequence>
<organism>
    <name type="scientific">Schizosaccharomyces pombe (strain 972 / ATCC 24843)</name>
    <name type="common">Fission yeast</name>
    <dbReference type="NCBI Taxonomy" id="284812"/>
    <lineage>
        <taxon>Eukaryota</taxon>
        <taxon>Fungi</taxon>
        <taxon>Dikarya</taxon>
        <taxon>Ascomycota</taxon>
        <taxon>Taphrinomycotina</taxon>
        <taxon>Schizosaccharomycetes</taxon>
        <taxon>Schizosaccharomycetales</taxon>
        <taxon>Schizosaccharomycetaceae</taxon>
        <taxon>Schizosaccharomyces</taxon>
    </lineage>
</organism>
<comment type="function">
    <text>Fatty acid synthetase catalyzes the formation of long-chain fatty acids from acetyl-CoA, malonyl-CoA and NADPH. The alpha subunit contains domains for: acyl carrier protein, 3-oxoacyl-[acyl-carrier-protein] reductase, and 3-oxoacyl-[acyl-carrier-protein] synthase. This subunit coordinates the binding of the six beta subunits to the enzyme complex.</text>
</comment>
<comment type="catalytic activity">
    <reaction>
        <text>acetyl-CoA + n malonyl-CoA + 2n NADPH + 4n H(+) = a long-chain-acyl-CoA + n CoA + n CO2 + 2n NADP(+).</text>
        <dbReference type="EC" id="2.3.1.86"/>
    </reaction>
</comment>
<comment type="catalytic activity">
    <reaction>
        <text>a fatty acyl-[ACP] + malonyl-[ACP] + H(+) = a 3-oxoacyl-[ACP] + holo-[ACP] + CO2</text>
        <dbReference type="Rhea" id="RHEA:22836"/>
        <dbReference type="Rhea" id="RHEA-COMP:9623"/>
        <dbReference type="Rhea" id="RHEA-COMP:9685"/>
        <dbReference type="Rhea" id="RHEA-COMP:9916"/>
        <dbReference type="Rhea" id="RHEA-COMP:14125"/>
        <dbReference type="ChEBI" id="CHEBI:15378"/>
        <dbReference type="ChEBI" id="CHEBI:16526"/>
        <dbReference type="ChEBI" id="CHEBI:64479"/>
        <dbReference type="ChEBI" id="CHEBI:78449"/>
        <dbReference type="ChEBI" id="CHEBI:78776"/>
        <dbReference type="ChEBI" id="CHEBI:138651"/>
        <dbReference type="EC" id="2.3.1.41"/>
    </reaction>
</comment>
<comment type="catalytic activity">
    <reaction>
        <text>a (3R)-hydroxyacyl-[ACP] + NADP(+) = a 3-oxoacyl-[ACP] + NADPH + H(+)</text>
        <dbReference type="Rhea" id="RHEA:17397"/>
        <dbReference type="Rhea" id="RHEA-COMP:9916"/>
        <dbReference type="Rhea" id="RHEA-COMP:9945"/>
        <dbReference type="ChEBI" id="CHEBI:15378"/>
        <dbReference type="ChEBI" id="CHEBI:57783"/>
        <dbReference type="ChEBI" id="CHEBI:58349"/>
        <dbReference type="ChEBI" id="CHEBI:78776"/>
        <dbReference type="ChEBI" id="CHEBI:78827"/>
        <dbReference type="EC" id="1.1.1.100"/>
    </reaction>
</comment>
<comment type="subunit">
    <text>[Alpha(6)beta(6)] hexamers of two multifunctional subunits (alpha and beta).</text>
</comment>
<comment type="similarity">
    <text evidence="6">Belongs to the thiolase-like superfamily. Fungal fatty acid synthetase subunit alpha family.</text>
</comment>
<gene>
    <name type="primary">fas2</name>
    <name type="synonym">lsd1</name>
    <name type="ORF">SPAC4A8.11c</name>
</gene>